<reference key="1">
    <citation type="submission" date="2008-08" db="EMBL/GenBank/DDBJ databases">
        <title>The complete genome sequence of Thermodesulfovibrio yellowstonii strain ATCC 51303 / DSM 11347 / YP87.</title>
        <authorList>
            <person name="Dodson R.J."/>
            <person name="Durkin A.S."/>
            <person name="Wu M."/>
            <person name="Eisen J."/>
            <person name="Sutton G."/>
        </authorList>
    </citation>
    <scope>NUCLEOTIDE SEQUENCE [LARGE SCALE GENOMIC DNA]</scope>
    <source>
        <strain>ATCC 51303 / DSM 11347 / YP87</strain>
    </source>
</reference>
<gene>
    <name evidence="1" type="primary">rpsS</name>
    <name type="ordered locus">THEYE_A1442</name>
</gene>
<sequence>MPRSLKKGPFVDVKLMEKVKKALESGDKKPIKTWSRRSTIIPEFIGLTFAVHNGRKFIPVYVTENMIGHKLGEFAPTRTFKGHAGSEEKKKAKGK</sequence>
<proteinExistence type="inferred from homology"/>
<comment type="function">
    <text evidence="1">Protein S19 forms a complex with S13 that binds strongly to the 16S ribosomal RNA.</text>
</comment>
<comment type="similarity">
    <text evidence="1">Belongs to the universal ribosomal protein uS19 family.</text>
</comment>
<feature type="chain" id="PRO_1000128052" description="Small ribosomal subunit protein uS19">
    <location>
        <begin position="1"/>
        <end position="95"/>
    </location>
</feature>
<accession>B5YG43</accession>
<organism>
    <name type="scientific">Thermodesulfovibrio yellowstonii (strain ATCC 51303 / DSM 11347 / YP87)</name>
    <dbReference type="NCBI Taxonomy" id="289376"/>
    <lineage>
        <taxon>Bacteria</taxon>
        <taxon>Pseudomonadati</taxon>
        <taxon>Nitrospirota</taxon>
        <taxon>Thermodesulfovibrionia</taxon>
        <taxon>Thermodesulfovibrionales</taxon>
        <taxon>Thermodesulfovibrionaceae</taxon>
        <taxon>Thermodesulfovibrio</taxon>
    </lineage>
</organism>
<protein>
    <recommendedName>
        <fullName evidence="1">Small ribosomal subunit protein uS19</fullName>
    </recommendedName>
    <alternativeName>
        <fullName evidence="2">30S ribosomal protein S19</fullName>
    </alternativeName>
</protein>
<evidence type="ECO:0000255" key="1">
    <source>
        <dbReference type="HAMAP-Rule" id="MF_00531"/>
    </source>
</evidence>
<evidence type="ECO:0000305" key="2"/>
<keyword id="KW-1185">Reference proteome</keyword>
<keyword id="KW-0687">Ribonucleoprotein</keyword>
<keyword id="KW-0689">Ribosomal protein</keyword>
<keyword id="KW-0694">RNA-binding</keyword>
<keyword id="KW-0699">rRNA-binding</keyword>
<name>RS19_THEYD</name>
<dbReference type="EMBL" id="CP001147">
    <property type="protein sequence ID" value="ACI20779.1"/>
    <property type="molecule type" value="Genomic_DNA"/>
</dbReference>
<dbReference type="RefSeq" id="WP_012545511.1">
    <property type="nucleotide sequence ID" value="NC_011296.1"/>
</dbReference>
<dbReference type="RefSeq" id="YP_002249241.1">
    <property type="nucleotide sequence ID" value="NC_011296.1"/>
</dbReference>
<dbReference type="SMR" id="B5YG43"/>
<dbReference type="FunCoup" id="B5YG43">
    <property type="interactions" value="428"/>
</dbReference>
<dbReference type="STRING" id="289376.THEYE_A1442"/>
<dbReference type="EnsemblBacteria" id="ACI20779">
    <property type="protein sequence ID" value="ACI20779"/>
    <property type="gene ID" value="THEYE_A1442"/>
</dbReference>
<dbReference type="KEGG" id="tye:THEYE_A1442"/>
<dbReference type="PATRIC" id="fig|289376.4.peg.1403"/>
<dbReference type="eggNOG" id="COG0185">
    <property type="taxonomic scope" value="Bacteria"/>
</dbReference>
<dbReference type="HOGENOM" id="CLU_144911_0_1_0"/>
<dbReference type="InParanoid" id="B5YG43"/>
<dbReference type="OrthoDB" id="9797833at2"/>
<dbReference type="Proteomes" id="UP000000718">
    <property type="component" value="Chromosome"/>
</dbReference>
<dbReference type="GO" id="GO:0005737">
    <property type="term" value="C:cytoplasm"/>
    <property type="evidence" value="ECO:0007669"/>
    <property type="project" value="UniProtKB-ARBA"/>
</dbReference>
<dbReference type="GO" id="GO:0015935">
    <property type="term" value="C:small ribosomal subunit"/>
    <property type="evidence" value="ECO:0007669"/>
    <property type="project" value="InterPro"/>
</dbReference>
<dbReference type="GO" id="GO:0019843">
    <property type="term" value="F:rRNA binding"/>
    <property type="evidence" value="ECO:0007669"/>
    <property type="project" value="UniProtKB-UniRule"/>
</dbReference>
<dbReference type="GO" id="GO:0003735">
    <property type="term" value="F:structural constituent of ribosome"/>
    <property type="evidence" value="ECO:0000318"/>
    <property type="project" value="GO_Central"/>
</dbReference>
<dbReference type="GO" id="GO:0000028">
    <property type="term" value="P:ribosomal small subunit assembly"/>
    <property type="evidence" value="ECO:0000318"/>
    <property type="project" value="GO_Central"/>
</dbReference>
<dbReference type="GO" id="GO:0006412">
    <property type="term" value="P:translation"/>
    <property type="evidence" value="ECO:0007669"/>
    <property type="project" value="UniProtKB-UniRule"/>
</dbReference>
<dbReference type="FunFam" id="3.30.860.10:FF:000001">
    <property type="entry name" value="30S ribosomal protein S19"/>
    <property type="match status" value="1"/>
</dbReference>
<dbReference type="Gene3D" id="3.30.860.10">
    <property type="entry name" value="30s Ribosomal Protein S19, Chain A"/>
    <property type="match status" value="1"/>
</dbReference>
<dbReference type="HAMAP" id="MF_00531">
    <property type="entry name" value="Ribosomal_uS19"/>
    <property type="match status" value="1"/>
</dbReference>
<dbReference type="InterPro" id="IPR002222">
    <property type="entry name" value="Ribosomal_uS19"/>
</dbReference>
<dbReference type="InterPro" id="IPR005732">
    <property type="entry name" value="Ribosomal_uS19_bac-type"/>
</dbReference>
<dbReference type="InterPro" id="IPR020934">
    <property type="entry name" value="Ribosomal_uS19_CS"/>
</dbReference>
<dbReference type="InterPro" id="IPR023575">
    <property type="entry name" value="Ribosomal_uS19_SF"/>
</dbReference>
<dbReference type="NCBIfam" id="TIGR01050">
    <property type="entry name" value="rpsS_bact"/>
    <property type="match status" value="1"/>
</dbReference>
<dbReference type="PANTHER" id="PTHR11880">
    <property type="entry name" value="RIBOSOMAL PROTEIN S19P FAMILY MEMBER"/>
    <property type="match status" value="1"/>
</dbReference>
<dbReference type="PANTHER" id="PTHR11880:SF8">
    <property type="entry name" value="SMALL RIBOSOMAL SUBUNIT PROTEIN US19M"/>
    <property type="match status" value="1"/>
</dbReference>
<dbReference type="Pfam" id="PF00203">
    <property type="entry name" value="Ribosomal_S19"/>
    <property type="match status" value="1"/>
</dbReference>
<dbReference type="PIRSF" id="PIRSF002144">
    <property type="entry name" value="Ribosomal_S19"/>
    <property type="match status" value="1"/>
</dbReference>
<dbReference type="PRINTS" id="PR00975">
    <property type="entry name" value="RIBOSOMALS19"/>
</dbReference>
<dbReference type="SUPFAM" id="SSF54570">
    <property type="entry name" value="Ribosomal protein S19"/>
    <property type="match status" value="1"/>
</dbReference>
<dbReference type="PROSITE" id="PS00323">
    <property type="entry name" value="RIBOSOMAL_S19"/>
    <property type="match status" value="1"/>
</dbReference>